<name>LRRD1_HUMAN</name>
<keyword id="KW-0025">Alternative splicing</keyword>
<keyword id="KW-0433">Leucine-rich repeat</keyword>
<keyword id="KW-1267">Proteomics identification</keyword>
<keyword id="KW-1185">Reference proteome</keyword>
<keyword id="KW-0677">Repeat</keyword>
<accession>A4D1F6</accession>
<accession>B7ZMM9</accession>
<accession>Q49AT9</accession>
<comment type="alternative products">
    <event type="alternative splicing"/>
    <isoform>
        <id>A4D1F6-1</id>
        <name>1</name>
        <sequence type="displayed"/>
    </isoform>
    <isoform>
        <id>A4D1F6-2</id>
        <name>2</name>
        <sequence type="described" ref="VSP_032412 VSP_032413"/>
    </isoform>
</comment>
<comment type="sequence caution" evidence="4">
    <conflict type="erroneous gene model prediction">
        <sequence resource="EMBL-CDS" id="EAL24153"/>
    </conflict>
</comment>
<protein>
    <recommendedName>
        <fullName>Leucine-rich repeat and death domain-containing protein 1</fullName>
    </recommendedName>
</protein>
<proteinExistence type="evidence at protein level"/>
<organism>
    <name type="scientific">Homo sapiens</name>
    <name type="common">Human</name>
    <dbReference type="NCBI Taxonomy" id="9606"/>
    <lineage>
        <taxon>Eukaryota</taxon>
        <taxon>Metazoa</taxon>
        <taxon>Chordata</taxon>
        <taxon>Craniata</taxon>
        <taxon>Vertebrata</taxon>
        <taxon>Euteleostomi</taxon>
        <taxon>Mammalia</taxon>
        <taxon>Eutheria</taxon>
        <taxon>Euarchontoglires</taxon>
        <taxon>Primates</taxon>
        <taxon>Haplorrhini</taxon>
        <taxon>Catarrhini</taxon>
        <taxon>Hominidae</taxon>
        <taxon>Homo</taxon>
    </lineage>
</organism>
<sequence length="860" mass="98035">MSEKEGMSEVLEDTISQFRKESRSQSMKEPGFIKETSNLINEASDYLEGKSSNQIYETHPRQNTLESTSSSGRKSKRNEEQKKNLQFSETSTRTGTSQSLSSLTGRTAEYQALVNFLSHETVGEVSPQVSEENQKQLGLGADNFTVNLEAKGLQEFPKDILKIKYVKYLYLDKNQIKTFQGADSGDLLGLEILSLQENGLSSLPSEIQLLHNLRILNVSHNHISHIPKEISQLGNIRQLFFYNNYIENFPSDLECLGNLEILSLGKNKLRHIPDTLPSLKTLRVLNLEYNQLTTFPKALCFLPKLISLDLTGNLISSLPKEIRELKNLETLLMDHNKLTFLAVEIFQLLKIKELQLADNKLEVISHKIENFRELRILILDKNLLKNIPEKISCCAMLECLSLSDNKLTELPKYIHKLNNLRKLHVNRNNMVKITDCISHLNNICSLEFSGNIITDVPIEIKNCQKIIKIELSYNKIMYFPLGLCALDSLYYLSVNGNYISEIPVDISFSKQLLHLELSENKLLIFSEHFCSLINLKYLDLGKNQIKKIPASISNMISLHVLILCCNKFETFPRELCTLENLQVLDLSENQLQKISSDICNLKGIQKLNFSSNQFIHFPIELCQLQSLEQLNISQIKGRKLTRLPGELSNMTQLKELDISNNAIREIPRNIGELRNLVSLHAYNNQISYLPPSLLSLNDLQQLNLSGNNLTALPSAIYNIFSLKEINFDDNPLLRPPVEICKGKQLYTIARYLQRADERDEKILEKIFKIVANNITETNFEFLCQKLNLANSETDMPTKSTVSLSERAHQALVIWKTQSNKLSLTAAALRDQLIRALTMIGAYEIMDKITALNLFTRAIKF</sequence>
<reference key="1">
    <citation type="journal article" date="2003" name="Nature">
        <title>The DNA sequence of human chromosome 7.</title>
        <authorList>
            <person name="Hillier L.W."/>
            <person name="Fulton R.S."/>
            <person name="Fulton L.A."/>
            <person name="Graves T.A."/>
            <person name="Pepin K.H."/>
            <person name="Wagner-McPherson C."/>
            <person name="Layman D."/>
            <person name="Maas J."/>
            <person name="Jaeger S."/>
            <person name="Walker R."/>
            <person name="Wylie K."/>
            <person name="Sekhon M."/>
            <person name="Becker M.C."/>
            <person name="O'Laughlin M.D."/>
            <person name="Schaller M.E."/>
            <person name="Fewell G.A."/>
            <person name="Delehaunty K.D."/>
            <person name="Miner T.L."/>
            <person name="Nash W.E."/>
            <person name="Cordes M."/>
            <person name="Du H."/>
            <person name="Sun H."/>
            <person name="Edwards J."/>
            <person name="Bradshaw-Cordum H."/>
            <person name="Ali J."/>
            <person name="Andrews S."/>
            <person name="Isak A."/>
            <person name="Vanbrunt A."/>
            <person name="Nguyen C."/>
            <person name="Du F."/>
            <person name="Lamar B."/>
            <person name="Courtney L."/>
            <person name="Kalicki J."/>
            <person name="Ozersky P."/>
            <person name="Bielicki L."/>
            <person name="Scott K."/>
            <person name="Holmes A."/>
            <person name="Harkins R."/>
            <person name="Harris A."/>
            <person name="Strong C.M."/>
            <person name="Hou S."/>
            <person name="Tomlinson C."/>
            <person name="Dauphin-Kohlberg S."/>
            <person name="Kozlowicz-Reilly A."/>
            <person name="Leonard S."/>
            <person name="Rohlfing T."/>
            <person name="Rock S.M."/>
            <person name="Tin-Wollam A.-M."/>
            <person name="Abbott A."/>
            <person name="Minx P."/>
            <person name="Maupin R."/>
            <person name="Strowmatt C."/>
            <person name="Latreille P."/>
            <person name="Miller N."/>
            <person name="Johnson D."/>
            <person name="Murray J."/>
            <person name="Woessner J.P."/>
            <person name="Wendl M.C."/>
            <person name="Yang S.-P."/>
            <person name="Schultz B.R."/>
            <person name="Wallis J.W."/>
            <person name="Spieth J."/>
            <person name="Bieri T.A."/>
            <person name="Nelson J.O."/>
            <person name="Berkowicz N."/>
            <person name="Wohldmann P.E."/>
            <person name="Cook L.L."/>
            <person name="Hickenbotham M.T."/>
            <person name="Eldred J."/>
            <person name="Williams D."/>
            <person name="Bedell J.A."/>
            <person name="Mardis E.R."/>
            <person name="Clifton S.W."/>
            <person name="Chissoe S.L."/>
            <person name="Marra M.A."/>
            <person name="Raymond C."/>
            <person name="Haugen E."/>
            <person name="Gillett W."/>
            <person name="Zhou Y."/>
            <person name="James R."/>
            <person name="Phelps K."/>
            <person name="Iadanoto S."/>
            <person name="Bubb K."/>
            <person name="Simms E."/>
            <person name="Levy R."/>
            <person name="Clendenning J."/>
            <person name="Kaul R."/>
            <person name="Kent W.J."/>
            <person name="Furey T.S."/>
            <person name="Baertsch R.A."/>
            <person name="Brent M.R."/>
            <person name="Keibler E."/>
            <person name="Flicek P."/>
            <person name="Bork P."/>
            <person name="Suyama M."/>
            <person name="Bailey J.A."/>
            <person name="Portnoy M.E."/>
            <person name="Torrents D."/>
            <person name="Chinwalla A.T."/>
            <person name="Gish W.R."/>
            <person name="Eddy S.R."/>
            <person name="McPherson J.D."/>
            <person name="Olson M.V."/>
            <person name="Eichler E.E."/>
            <person name="Green E.D."/>
            <person name="Waterston R.H."/>
            <person name="Wilson R.K."/>
        </authorList>
    </citation>
    <scope>NUCLEOTIDE SEQUENCE [LARGE SCALE GENOMIC DNA]</scope>
</reference>
<reference key="2">
    <citation type="journal article" date="2003" name="Science">
        <title>Human chromosome 7: DNA sequence and biology.</title>
        <authorList>
            <person name="Scherer S.W."/>
            <person name="Cheung J."/>
            <person name="MacDonald J.R."/>
            <person name="Osborne L.R."/>
            <person name="Nakabayashi K."/>
            <person name="Herbrick J.-A."/>
            <person name="Carson A.R."/>
            <person name="Parker-Katiraee L."/>
            <person name="Skaug J."/>
            <person name="Khaja R."/>
            <person name="Zhang J."/>
            <person name="Hudek A.K."/>
            <person name="Li M."/>
            <person name="Haddad M."/>
            <person name="Duggan G.E."/>
            <person name="Fernandez B.A."/>
            <person name="Kanematsu E."/>
            <person name="Gentles S."/>
            <person name="Christopoulos C.C."/>
            <person name="Choufani S."/>
            <person name="Kwasnicka D."/>
            <person name="Zheng X.H."/>
            <person name="Lai Z."/>
            <person name="Nusskern D.R."/>
            <person name="Zhang Q."/>
            <person name="Gu Z."/>
            <person name="Lu F."/>
            <person name="Zeesman S."/>
            <person name="Nowaczyk M.J."/>
            <person name="Teshima I."/>
            <person name="Chitayat D."/>
            <person name="Shuman C."/>
            <person name="Weksberg R."/>
            <person name="Zackai E.H."/>
            <person name="Grebe T.A."/>
            <person name="Cox S.R."/>
            <person name="Kirkpatrick S.J."/>
            <person name="Rahman N."/>
            <person name="Friedman J.M."/>
            <person name="Heng H.H.Q."/>
            <person name="Pelicci P.G."/>
            <person name="Lo-Coco F."/>
            <person name="Belloni E."/>
            <person name="Shaffer L.G."/>
            <person name="Pober B."/>
            <person name="Morton C.C."/>
            <person name="Gusella J.F."/>
            <person name="Bruns G.A.P."/>
            <person name="Korf B.R."/>
            <person name="Quade B.J."/>
            <person name="Ligon A.H."/>
            <person name="Ferguson H."/>
            <person name="Higgins A.W."/>
            <person name="Leach N.T."/>
            <person name="Herrick S.R."/>
            <person name="Lemyre E."/>
            <person name="Farra C.G."/>
            <person name="Kim H.-G."/>
            <person name="Summers A.M."/>
            <person name="Gripp K.W."/>
            <person name="Roberts W."/>
            <person name="Szatmari P."/>
            <person name="Winsor E.J.T."/>
            <person name="Grzeschik K.-H."/>
            <person name="Teebi A."/>
            <person name="Minassian B.A."/>
            <person name="Kere J."/>
            <person name="Armengol L."/>
            <person name="Pujana M.A."/>
            <person name="Estivill X."/>
            <person name="Wilson M.D."/>
            <person name="Koop B.F."/>
            <person name="Tosi S."/>
            <person name="Moore G.E."/>
            <person name="Boright A.P."/>
            <person name="Zlotorynski E."/>
            <person name="Kerem B."/>
            <person name="Kroisel P.M."/>
            <person name="Petek E."/>
            <person name="Oscier D.G."/>
            <person name="Mould S.J."/>
            <person name="Doehner H."/>
            <person name="Doehner K."/>
            <person name="Rommens J.M."/>
            <person name="Vincent J.B."/>
            <person name="Venter J.C."/>
            <person name="Li P.W."/>
            <person name="Mural R.J."/>
            <person name="Adams M.D."/>
            <person name="Tsui L.-C."/>
        </authorList>
    </citation>
    <scope>NUCLEOTIDE SEQUENCE [LARGE SCALE GENOMIC DNA]</scope>
</reference>
<reference key="3">
    <citation type="journal article" date="2004" name="Genome Res.">
        <title>The status, quality, and expansion of the NIH full-length cDNA project: the Mammalian Gene Collection (MGC).</title>
        <authorList>
            <consortium name="The MGC Project Team"/>
        </authorList>
    </citation>
    <scope>NUCLEOTIDE SEQUENCE [LARGE SCALE MRNA] (ISOFORM 2)</scope>
    <source>
        <tissue>Brain</tissue>
    </source>
</reference>
<evidence type="ECO:0000255" key="1">
    <source>
        <dbReference type="PROSITE-ProRule" id="PRU00064"/>
    </source>
</evidence>
<evidence type="ECO:0000256" key="2">
    <source>
        <dbReference type="SAM" id="MobiDB-lite"/>
    </source>
</evidence>
<evidence type="ECO:0000303" key="3">
    <source>
    </source>
</evidence>
<evidence type="ECO:0000305" key="4"/>
<gene>
    <name type="primary">LRRD1</name>
</gene>
<feature type="chain" id="PRO_0000325804" description="Leucine-rich repeat and death domain-containing protein 1">
    <location>
        <begin position="1"/>
        <end position="860"/>
    </location>
</feature>
<feature type="repeat" description="LRR 1">
    <location>
        <begin position="139"/>
        <end position="163"/>
    </location>
</feature>
<feature type="repeat" description="LRR 2">
    <location>
        <begin position="164"/>
        <end position="186"/>
    </location>
</feature>
<feature type="repeat" description="LRR 3">
    <location>
        <begin position="187"/>
        <end position="210"/>
    </location>
</feature>
<feature type="repeat" description="LRR 4">
    <location>
        <begin position="211"/>
        <end position="233"/>
    </location>
</feature>
<feature type="repeat" description="LRR 5">
    <location>
        <begin position="235"/>
        <end position="256"/>
    </location>
</feature>
<feature type="repeat" description="LRR 6">
    <location>
        <begin position="257"/>
        <end position="279"/>
    </location>
</feature>
<feature type="repeat" description="LRR 7">
    <location>
        <begin position="281"/>
        <end position="302"/>
    </location>
</feature>
<feature type="repeat" description="LRR 8">
    <location>
        <begin position="303"/>
        <end position="325"/>
    </location>
</feature>
<feature type="repeat" description="LRR 9">
    <location>
        <begin position="326"/>
        <end position="348"/>
    </location>
</feature>
<feature type="repeat" description="LRR 10">
    <location>
        <begin position="350"/>
        <end position="371"/>
    </location>
</feature>
<feature type="repeat" description="LRR 11">
    <location>
        <begin position="372"/>
        <end position="394"/>
    </location>
</feature>
<feature type="repeat" description="LRR 12">
    <location>
        <begin position="396"/>
        <end position="417"/>
    </location>
</feature>
<feature type="repeat" description="LRR 13">
    <location>
        <begin position="419"/>
        <end position="440"/>
    </location>
</feature>
<feature type="repeat" description="LRR 14">
    <location>
        <begin position="441"/>
        <end position="463"/>
    </location>
</feature>
<feature type="repeat" description="LRR 15">
    <location>
        <begin position="465"/>
        <end position="486"/>
    </location>
</feature>
<feature type="repeat" description="LRR 16">
    <location>
        <begin position="487"/>
        <end position="510"/>
    </location>
</feature>
<feature type="repeat" description="LRR 17">
    <location>
        <begin position="512"/>
        <end position="532"/>
    </location>
</feature>
<feature type="repeat" description="LRR 18">
    <location>
        <begin position="533"/>
        <end position="555"/>
    </location>
</feature>
<feature type="repeat" description="LRR 19">
    <location>
        <begin position="557"/>
        <end position="578"/>
    </location>
</feature>
<feature type="repeat" description="LRR 20">
    <location>
        <begin position="579"/>
        <end position="601"/>
    </location>
</feature>
<feature type="repeat" description="LRR 21">
    <location>
        <begin position="603"/>
        <end position="624"/>
    </location>
</feature>
<feature type="repeat" description="LRR 22">
    <location>
        <begin position="627"/>
        <end position="650"/>
    </location>
</feature>
<feature type="repeat" description="LRR 23">
    <location>
        <begin position="651"/>
        <end position="673"/>
    </location>
</feature>
<feature type="repeat" description="LRR 24">
    <location>
        <begin position="675"/>
        <end position="696"/>
    </location>
</feature>
<feature type="repeat" description="LRR 25">
    <location>
        <begin position="697"/>
        <end position="719"/>
    </location>
</feature>
<feature type="repeat" description="LRR 26">
    <location>
        <begin position="721"/>
        <end position="742"/>
    </location>
</feature>
<feature type="domain" description="Death" evidence="1">
    <location>
        <begin position="764"/>
        <end position="852"/>
    </location>
</feature>
<feature type="repeat" description="LRR 27">
    <location>
        <begin position="856"/>
        <end position="860"/>
    </location>
</feature>
<feature type="region of interest" description="Disordered" evidence="2">
    <location>
        <begin position="1"/>
        <end position="103"/>
    </location>
</feature>
<feature type="compositionally biased region" description="Polar residues" evidence="2">
    <location>
        <begin position="50"/>
        <end position="72"/>
    </location>
</feature>
<feature type="compositionally biased region" description="Low complexity" evidence="2">
    <location>
        <begin position="90"/>
        <end position="103"/>
    </location>
</feature>
<feature type="splice variant" id="VSP_032412" description="In isoform 2." evidence="3">
    <location>
        <begin position="1"/>
        <end position="649"/>
    </location>
</feature>
<feature type="splice variant" id="VSP_032413" description="In isoform 2." evidence="3">
    <original>EKILEKIFKIVANNITETNFEFLCQKLNLANSETDMPTKSTVSLSERAHQALVIWKTQSNKLSLTAAALRDQLIRALTMIGAYEIMDKITALNLFTRAIKF</original>
    <variation>GLQLHS</variation>
    <location>
        <begin position="760"/>
        <end position="860"/>
    </location>
</feature>
<feature type="sequence conflict" description="In Ref. 3; AAH26112." evidence="4" ref="3">
    <original>Y</original>
    <variation>C</variation>
    <location>
        <position position="717"/>
    </location>
</feature>
<dbReference type="EMBL" id="AC000120">
    <property type="status" value="NOT_ANNOTATED_CDS"/>
    <property type="molecule type" value="Genomic_DNA"/>
</dbReference>
<dbReference type="EMBL" id="CH236949">
    <property type="protein sequence ID" value="EAL24153.1"/>
    <property type="status" value="ALT_SEQ"/>
    <property type="molecule type" value="Genomic_DNA"/>
</dbReference>
<dbReference type="EMBL" id="BC026112">
    <property type="protein sequence ID" value="AAH26112.1"/>
    <property type="molecule type" value="mRNA"/>
</dbReference>
<dbReference type="EMBL" id="BC144674">
    <property type="protein sequence ID" value="AAI44675.1"/>
    <property type="molecule type" value="mRNA"/>
</dbReference>
<dbReference type="EMBL" id="BC144678">
    <property type="protein sequence ID" value="AAI44679.1"/>
    <property type="molecule type" value="mRNA"/>
</dbReference>
<dbReference type="CCDS" id="CCDS55124.1">
    <molecule id="A4D1F6-1"/>
</dbReference>
<dbReference type="CCDS" id="CCDS94143.1">
    <molecule id="A4D1F6-2"/>
</dbReference>
<dbReference type="RefSeq" id="NP_001155000.1">
    <molecule id="A4D1F6-1"/>
    <property type="nucleotide sequence ID" value="NM_001161528.2"/>
</dbReference>
<dbReference type="RefSeq" id="NP_001371861.1">
    <molecule id="A4D1F6-2"/>
    <property type="nucleotide sequence ID" value="NM_001384932.1"/>
</dbReference>
<dbReference type="RefSeq" id="NP_001371862.1">
    <molecule id="A4D1F6-2"/>
    <property type="nucleotide sequence ID" value="NM_001384933.1"/>
</dbReference>
<dbReference type="RefSeq" id="NP_001371863.1">
    <molecule id="A4D1F6-2"/>
    <property type="nucleotide sequence ID" value="NM_001384934.1"/>
</dbReference>
<dbReference type="SMR" id="A4D1F6"/>
<dbReference type="BioGRID" id="135062">
    <property type="interactions" value="3"/>
</dbReference>
<dbReference type="FunCoup" id="A4D1F6">
    <property type="interactions" value="3"/>
</dbReference>
<dbReference type="IntAct" id="A4D1F6">
    <property type="interactions" value="1"/>
</dbReference>
<dbReference type="STRING" id="9606.ENSP00000405987"/>
<dbReference type="GlyGen" id="A4D1F6">
    <property type="glycosylation" value="1 site, 1 O-linked glycan (1 site)"/>
</dbReference>
<dbReference type="PhosphoSitePlus" id="A4D1F6"/>
<dbReference type="BioMuta" id="LRRD1"/>
<dbReference type="MassIVE" id="A4D1F6"/>
<dbReference type="PaxDb" id="9606-ENSP00000405987"/>
<dbReference type="PeptideAtlas" id="A4D1F6"/>
<dbReference type="ProteomicsDB" id="618">
    <molecule id="A4D1F6-1"/>
</dbReference>
<dbReference type="ProteomicsDB" id="619">
    <molecule id="A4D1F6-2"/>
</dbReference>
<dbReference type="Antibodypedia" id="58070">
    <property type="antibodies" value="3 antibodies from 3 providers"/>
</dbReference>
<dbReference type="DNASU" id="401387"/>
<dbReference type="Ensembl" id="ENST00000343318.9">
    <molecule id="A4D1F6-2"/>
    <property type="protein sequence ID" value="ENSP00000339642.5"/>
    <property type="gene ID" value="ENSG00000240720.10"/>
</dbReference>
<dbReference type="Ensembl" id="ENST00000458448.6">
    <molecule id="A4D1F6-1"/>
    <property type="protein sequence ID" value="ENSP00000405987.1"/>
    <property type="gene ID" value="ENSG00000240720.10"/>
</dbReference>
<dbReference type="GeneID" id="401387"/>
<dbReference type="KEGG" id="hsa:401387"/>
<dbReference type="MANE-Select" id="ENST00000458448.6">
    <property type="protein sequence ID" value="ENSP00000405987.1"/>
    <property type="RefSeq nucleotide sequence ID" value="NM_001161528.2"/>
    <property type="RefSeq protein sequence ID" value="NP_001155000.1"/>
</dbReference>
<dbReference type="UCSC" id="uc011kho.4">
    <molecule id="A4D1F6-1"/>
    <property type="organism name" value="human"/>
</dbReference>
<dbReference type="AGR" id="HGNC:34300"/>
<dbReference type="CTD" id="401387"/>
<dbReference type="DisGeNET" id="401387"/>
<dbReference type="GeneCards" id="LRRD1"/>
<dbReference type="HGNC" id="HGNC:34300">
    <property type="gene designation" value="LRRD1"/>
</dbReference>
<dbReference type="HPA" id="ENSG00000240720">
    <property type="expression patterns" value="Tissue enriched (testis)"/>
</dbReference>
<dbReference type="neXtProt" id="NX_A4D1F6"/>
<dbReference type="VEuPathDB" id="HostDB:ENSG00000240720"/>
<dbReference type="eggNOG" id="KOG0619">
    <property type="taxonomic scope" value="Eukaryota"/>
</dbReference>
<dbReference type="GeneTree" id="ENSGT00940000161427"/>
<dbReference type="HOGENOM" id="CLU_000288_18_17_1"/>
<dbReference type="InParanoid" id="A4D1F6"/>
<dbReference type="OMA" id="QFPVGLC"/>
<dbReference type="OrthoDB" id="1055148at2759"/>
<dbReference type="PAN-GO" id="A4D1F6">
    <property type="GO annotations" value="2 GO annotations based on evolutionary models"/>
</dbReference>
<dbReference type="PhylomeDB" id="A4D1F6"/>
<dbReference type="TreeFam" id="TF351429"/>
<dbReference type="PathwayCommons" id="A4D1F6"/>
<dbReference type="SignaLink" id="A4D1F6"/>
<dbReference type="BioGRID-ORCS" id="401387">
    <property type="hits" value="11 hits in 1143 CRISPR screens"/>
</dbReference>
<dbReference type="GenomeRNAi" id="401387"/>
<dbReference type="Pharos" id="A4D1F6">
    <property type="development level" value="Tdark"/>
</dbReference>
<dbReference type="PRO" id="PR:A4D1F6"/>
<dbReference type="Proteomes" id="UP000005640">
    <property type="component" value="Chromosome 7"/>
</dbReference>
<dbReference type="RNAct" id="A4D1F6">
    <property type="molecule type" value="protein"/>
</dbReference>
<dbReference type="Bgee" id="ENSG00000240720">
    <property type="expression patterns" value="Expressed in male germ line stem cell (sensu Vertebrata) in testis and 55 other cell types or tissues"/>
</dbReference>
<dbReference type="ExpressionAtlas" id="A4D1F6">
    <property type="expression patterns" value="baseline and differential"/>
</dbReference>
<dbReference type="GO" id="GO:0005737">
    <property type="term" value="C:cytoplasm"/>
    <property type="evidence" value="ECO:0000318"/>
    <property type="project" value="GO_Central"/>
</dbReference>
<dbReference type="GO" id="GO:0007165">
    <property type="term" value="P:signal transduction"/>
    <property type="evidence" value="ECO:0007669"/>
    <property type="project" value="InterPro"/>
</dbReference>
<dbReference type="FunFam" id="1.10.533.10:FF:000083">
    <property type="entry name" value="Leucine rich repeats and death domain containing 1"/>
    <property type="match status" value="1"/>
</dbReference>
<dbReference type="FunFam" id="3.80.10.10:FF:001144">
    <property type="entry name" value="Leucine rich repeats and death domain containing 1"/>
    <property type="match status" value="1"/>
</dbReference>
<dbReference type="FunFam" id="3.80.10.10:FF:001695">
    <property type="entry name" value="Leucine rich repeats and death domain containing 1"/>
    <property type="match status" value="1"/>
</dbReference>
<dbReference type="FunFam" id="3.80.10.10:FF:002618">
    <property type="entry name" value="Leucine-rich repeat and death domain-containing protein 1"/>
    <property type="match status" value="1"/>
</dbReference>
<dbReference type="FunFam" id="3.80.10.10:FF:000307">
    <property type="entry name" value="Leucine-rich repeats and death domain-containing 1"/>
    <property type="match status" value="1"/>
</dbReference>
<dbReference type="Gene3D" id="1.10.533.10">
    <property type="entry name" value="Death Domain, Fas"/>
    <property type="match status" value="1"/>
</dbReference>
<dbReference type="Gene3D" id="3.80.10.10">
    <property type="entry name" value="Ribonuclease Inhibitor"/>
    <property type="match status" value="6"/>
</dbReference>
<dbReference type="InterPro" id="IPR056869">
    <property type="entry name" value="DD_LRRD1"/>
</dbReference>
<dbReference type="InterPro" id="IPR011029">
    <property type="entry name" value="DEATH-like_dom_sf"/>
</dbReference>
<dbReference type="InterPro" id="IPR000488">
    <property type="entry name" value="Death_dom"/>
</dbReference>
<dbReference type="InterPro" id="IPR001611">
    <property type="entry name" value="Leu-rich_rpt"/>
</dbReference>
<dbReference type="InterPro" id="IPR003591">
    <property type="entry name" value="Leu-rich_rpt_typical-subtyp"/>
</dbReference>
<dbReference type="InterPro" id="IPR032675">
    <property type="entry name" value="LRR_dom_sf"/>
</dbReference>
<dbReference type="InterPro" id="IPR050216">
    <property type="entry name" value="LRR_domain-containing"/>
</dbReference>
<dbReference type="InterPro" id="IPR055414">
    <property type="entry name" value="LRR_R13L4/SHOC2-like"/>
</dbReference>
<dbReference type="PANTHER" id="PTHR48051">
    <property type="match status" value="1"/>
</dbReference>
<dbReference type="PANTHER" id="PTHR48051:SF36">
    <property type="entry name" value="CASPASE FAMILY P20 DOMAIN-CONTAINING PROTEIN"/>
    <property type="match status" value="1"/>
</dbReference>
<dbReference type="Pfam" id="PF24978">
    <property type="entry name" value="Death_Lrrd1"/>
    <property type="match status" value="1"/>
</dbReference>
<dbReference type="Pfam" id="PF00560">
    <property type="entry name" value="LRR_1"/>
    <property type="match status" value="1"/>
</dbReference>
<dbReference type="Pfam" id="PF23598">
    <property type="entry name" value="LRR_14"/>
    <property type="match status" value="2"/>
</dbReference>
<dbReference type="Pfam" id="PF13855">
    <property type="entry name" value="LRR_8"/>
    <property type="match status" value="2"/>
</dbReference>
<dbReference type="PRINTS" id="PR00019">
    <property type="entry name" value="LEURICHRPT"/>
</dbReference>
<dbReference type="SMART" id="SM00364">
    <property type="entry name" value="LRR_BAC"/>
    <property type="match status" value="13"/>
</dbReference>
<dbReference type="SMART" id="SM00365">
    <property type="entry name" value="LRR_SD22"/>
    <property type="match status" value="10"/>
</dbReference>
<dbReference type="SMART" id="SM00369">
    <property type="entry name" value="LRR_TYP"/>
    <property type="match status" value="15"/>
</dbReference>
<dbReference type="SUPFAM" id="SSF52058">
    <property type="entry name" value="L domain-like"/>
    <property type="match status" value="2"/>
</dbReference>
<dbReference type="PROSITE" id="PS50017">
    <property type="entry name" value="DEATH_DOMAIN"/>
    <property type="match status" value="1"/>
</dbReference>
<dbReference type="PROSITE" id="PS51450">
    <property type="entry name" value="LRR"/>
    <property type="match status" value="22"/>
</dbReference>